<dbReference type="EMBL" id="L09751">
    <property type="status" value="NOT_ANNOTATED_CDS"/>
    <property type="molecule type" value="Genomic_DNA"/>
</dbReference>
<dbReference type="EMBL" id="Z73197">
    <property type="protein sequence ID" value="CAA97548.1"/>
    <property type="molecule type" value="Genomic_DNA"/>
</dbReference>
<dbReference type="EMBL" id="AY558202">
    <property type="protein sequence ID" value="AAS56528.1"/>
    <property type="molecule type" value="Genomic_DNA"/>
</dbReference>
<dbReference type="EMBL" id="BK006945">
    <property type="protein sequence ID" value="DAA09343.1"/>
    <property type="molecule type" value="Genomic_DNA"/>
</dbReference>
<dbReference type="PIR" id="S52590">
    <property type="entry name" value="S52590"/>
</dbReference>
<dbReference type="RefSeq" id="NP_013125.1">
    <property type="nucleotide sequence ID" value="NM_001181912.1"/>
</dbReference>
<dbReference type="PDB" id="5FD7">
    <property type="method" value="X-ray"/>
    <property type="resolution" value="2.40 A"/>
    <property type="chains" value="A=12-150"/>
</dbReference>
<dbReference type="PDB" id="5FD9">
    <property type="method" value="X-ray"/>
    <property type="resolution" value="1.60 A"/>
    <property type="chains" value="A=12-150"/>
</dbReference>
<dbReference type="PDB" id="5T8L">
    <property type="method" value="X-ray"/>
    <property type="resolution" value="2.20 A"/>
    <property type="chains" value="A=12-150"/>
</dbReference>
<dbReference type="PDB" id="5T8N">
    <property type="method" value="X-ray"/>
    <property type="resolution" value="2.20 A"/>
    <property type="chains" value="A=12-150"/>
</dbReference>
<dbReference type="PDB" id="8WB6">
    <property type="method" value="EM"/>
    <property type="resolution" value="7.10 A"/>
    <property type="chains" value="A=1-240"/>
</dbReference>
<dbReference type="PDB" id="8WB7">
    <property type="method" value="EM"/>
    <property type="resolution" value="7.40 A"/>
    <property type="chains" value="A=1-240"/>
</dbReference>
<dbReference type="PDBsum" id="5FD7"/>
<dbReference type="PDBsum" id="5FD9"/>
<dbReference type="PDBsum" id="5T8L"/>
<dbReference type="PDBsum" id="5T8N"/>
<dbReference type="PDBsum" id="8WB6"/>
<dbReference type="PDBsum" id="8WB7"/>
<dbReference type="SMR" id="P39929"/>
<dbReference type="BioGRID" id="31299">
    <property type="interactions" value="172"/>
</dbReference>
<dbReference type="ComplexPortal" id="CPX-1624">
    <property type="entry name" value="ESCRT-III complex"/>
</dbReference>
<dbReference type="DIP" id="DIP-1747N"/>
<dbReference type="FunCoup" id="P39929">
    <property type="interactions" value="820"/>
</dbReference>
<dbReference type="IntAct" id="P39929">
    <property type="interactions" value="37"/>
</dbReference>
<dbReference type="MINT" id="P39929"/>
<dbReference type="STRING" id="4932.YLR025W"/>
<dbReference type="TCDB" id="3.A.31.1.1">
    <property type="family name" value="the endosomal sorting complexes required for transport iii (escrt-iii) family"/>
</dbReference>
<dbReference type="iPTMnet" id="P39929"/>
<dbReference type="PaxDb" id="4932-YLR025W"/>
<dbReference type="PeptideAtlas" id="P39929"/>
<dbReference type="EnsemblFungi" id="YLR025W_mRNA">
    <property type="protein sequence ID" value="YLR025W"/>
    <property type="gene ID" value="YLR025W"/>
</dbReference>
<dbReference type="GeneID" id="850712"/>
<dbReference type="KEGG" id="sce:YLR025W"/>
<dbReference type="AGR" id="SGD:S000004015"/>
<dbReference type="SGD" id="S000004015">
    <property type="gene designation" value="SNF7"/>
</dbReference>
<dbReference type="VEuPathDB" id="FungiDB:YLR025W"/>
<dbReference type="eggNOG" id="KOG1656">
    <property type="taxonomic scope" value="Eukaryota"/>
</dbReference>
<dbReference type="HOGENOM" id="CLU_071097_1_0_1"/>
<dbReference type="InParanoid" id="P39929"/>
<dbReference type="OMA" id="MKQIHGG"/>
<dbReference type="OrthoDB" id="5592979at2759"/>
<dbReference type="BioCyc" id="YEAST:G3O-32186-MONOMER"/>
<dbReference type="Reactome" id="R-SCE-1632852">
    <property type="pathway name" value="Macroautophagy"/>
</dbReference>
<dbReference type="Reactome" id="R-SCE-917729">
    <property type="pathway name" value="Endosomal Sorting Complex Required For Transport (ESCRT)"/>
</dbReference>
<dbReference type="Reactome" id="R-SCE-9668328">
    <property type="pathway name" value="Sealing of the nuclear envelope (NE) by ESCRT-III"/>
</dbReference>
<dbReference type="BioGRID-ORCS" id="850712">
    <property type="hits" value="6 hits in 10 CRISPR screens"/>
</dbReference>
<dbReference type="EvolutionaryTrace" id="P39929"/>
<dbReference type="PRO" id="PR:P39929"/>
<dbReference type="Proteomes" id="UP000002311">
    <property type="component" value="Chromosome XII"/>
</dbReference>
<dbReference type="RNAct" id="P39929">
    <property type="molecule type" value="protein"/>
</dbReference>
<dbReference type="GO" id="GO:0005737">
    <property type="term" value="C:cytoplasm"/>
    <property type="evidence" value="ECO:0000314"/>
    <property type="project" value="SGD"/>
</dbReference>
<dbReference type="GO" id="GO:0009898">
    <property type="term" value="C:cytoplasmic side of plasma membrane"/>
    <property type="evidence" value="ECO:0000318"/>
    <property type="project" value="GO_Central"/>
</dbReference>
<dbReference type="GO" id="GO:0005829">
    <property type="term" value="C:cytosol"/>
    <property type="evidence" value="ECO:0000314"/>
    <property type="project" value="SGD"/>
</dbReference>
<dbReference type="GO" id="GO:0000815">
    <property type="term" value="C:ESCRT III complex"/>
    <property type="evidence" value="ECO:0000314"/>
    <property type="project" value="SGD"/>
</dbReference>
<dbReference type="GO" id="GO:0005771">
    <property type="term" value="C:multivesicular body"/>
    <property type="evidence" value="ECO:0000318"/>
    <property type="project" value="GO_Central"/>
</dbReference>
<dbReference type="GO" id="GO:0005635">
    <property type="term" value="C:nuclear envelope"/>
    <property type="evidence" value="ECO:0007669"/>
    <property type="project" value="UniProtKB-SubCell"/>
</dbReference>
<dbReference type="GO" id="GO:0005886">
    <property type="term" value="C:plasma membrane"/>
    <property type="evidence" value="ECO:0000314"/>
    <property type="project" value="SGD"/>
</dbReference>
<dbReference type="GO" id="GO:0042802">
    <property type="term" value="F:identical protein binding"/>
    <property type="evidence" value="ECO:0000353"/>
    <property type="project" value="IntAct"/>
</dbReference>
<dbReference type="GO" id="GO:1904669">
    <property type="term" value="P:ATP export"/>
    <property type="evidence" value="ECO:0000315"/>
    <property type="project" value="SGD"/>
</dbReference>
<dbReference type="GO" id="GO:0070676">
    <property type="term" value="P:intralumenal vesicle formation"/>
    <property type="evidence" value="ECO:0000315"/>
    <property type="project" value="SGD"/>
</dbReference>
<dbReference type="GO" id="GO:0045324">
    <property type="term" value="P:late endosome to vacuole transport"/>
    <property type="evidence" value="ECO:0000315"/>
    <property type="project" value="SGD"/>
</dbReference>
<dbReference type="GO" id="GO:0032511">
    <property type="term" value="P:late endosome to vacuole transport via multivesicular body sorting pathway"/>
    <property type="evidence" value="ECO:0000318"/>
    <property type="project" value="GO_Central"/>
</dbReference>
<dbReference type="GO" id="GO:0007031">
    <property type="term" value="P:peroxisome organization"/>
    <property type="evidence" value="ECO:0000315"/>
    <property type="project" value="SGD"/>
</dbReference>
<dbReference type="GO" id="GO:0015031">
    <property type="term" value="P:protein transport"/>
    <property type="evidence" value="ECO:0007669"/>
    <property type="project" value="UniProtKB-KW"/>
</dbReference>
<dbReference type="GO" id="GO:0061709">
    <property type="term" value="P:reticulophagy"/>
    <property type="evidence" value="ECO:0000314"/>
    <property type="project" value="SGD"/>
</dbReference>
<dbReference type="GO" id="GO:0043162">
    <property type="term" value="P:ubiquitin-dependent protein catabolic process via the multivesicular body sorting pathway"/>
    <property type="evidence" value="ECO:0000314"/>
    <property type="project" value="ComplexPortal"/>
</dbReference>
<dbReference type="GO" id="GO:0006900">
    <property type="term" value="P:vesicle budding from membrane"/>
    <property type="evidence" value="ECO:0000318"/>
    <property type="project" value="GO_Central"/>
</dbReference>
<dbReference type="FunFam" id="1.10.287.1060:FF:000012">
    <property type="entry name" value="Vacuolar sorting protein SNF7"/>
    <property type="match status" value="1"/>
</dbReference>
<dbReference type="Gene3D" id="6.10.250.1710">
    <property type="match status" value="1"/>
</dbReference>
<dbReference type="Gene3D" id="1.10.287.1060">
    <property type="entry name" value="ESAT-6-like"/>
    <property type="match status" value="1"/>
</dbReference>
<dbReference type="InterPro" id="IPR005024">
    <property type="entry name" value="Snf7_fam"/>
</dbReference>
<dbReference type="PANTHER" id="PTHR22761">
    <property type="entry name" value="CHARGED MULTIVESICULAR BODY PROTEIN"/>
    <property type="match status" value="1"/>
</dbReference>
<dbReference type="PANTHER" id="PTHR22761:SF10">
    <property type="entry name" value="GH13992P"/>
    <property type="match status" value="1"/>
</dbReference>
<dbReference type="Pfam" id="PF03357">
    <property type="entry name" value="Snf7"/>
    <property type="match status" value="1"/>
</dbReference>
<organism>
    <name type="scientific">Saccharomyces cerevisiae (strain ATCC 204508 / S288c)</name>
    <name type="common">Baker's yeast</name>
    <dbReference type="NCBI Taxonomy" id="559292"/>
    <lineage>
        <taxon>Eukaryota</taxon>
        <taxon>Fungi</taxon>
        <taxon>Dikarya</taxon>
        <taxon>Ascomycota</taxon>
        <taxon>Saccharomycotina</taxon>
        <taxon>Saccharomycetes</taxon>
        <taxon>Saccharomycetales</taxon>
        <taxon>Saccharomycetaceae</taxon>
        <taxon>Saccharomyces</taxon>
    </lineage>
</organism>
<evidence type="ECO:0000256" key="1">
    <source>
        <dbReference type="SAM" id="MobiDB-lite"/>
    </source>
</evidence>
<evidence type="ECO:0000269" key="2">
    <source>
    </source>
</evidence>
<evidence type="ECO:0000269" key="3">
    <source>
    </source>
</evidence>
<evidence type="ECO:0000269" key="4">
    <source>
    </source>
</evidence>
<evidence type="ECO:0000269" key="5">
    <source>
    </source>
</evidence>
<evidence type="ECO:0000269" key="6">
    <source>
    </source>
</evidence>
<evidence type="ECO:0000269" key="7">
    <source>
    </source>
</evidence>
<evidence type="ECO:0000269" key="8">
    <source>
    </source>
</evidence>
<evidence type="ECO:0000269" key="9">
    <source>
    </source>
</evidence>
<evidence type="ECO:0000269" key="10">
    <source>
    </source>
</evidence>
<evidence type="ECO:0000269" key="11">
    <source>
    </source>
</evidence>
<evidence type="ECO:0000269" key="12">
    <source>
    </source>
</evidence>
<evidence type="ECO:0000269" key="13">
    <source>
    </source>
</evidence>
<evidence type="ECO:0000269" key="14">
    <source>
    </source>
</evidence>
<evidence type="ECO:0000269" key="15">
    <source>
    </source>
</evidence>
<evidence type="ECO:0000269" key="16">
    <source>
    </source>
</evidence>
<evidence type="ECO:0000303" key="17">
    <source>
    </source>
</evidence>
<evidence type="ECO:0000303" key="18">
    <source>
    </source>
</evidence>
<evidence type="ECO:0000303" key="19">
    <source>
    </source>
</evidence>
<evidence type="ECO:0000305" key="20"/>
<evidence type="ECO:0000305" key="21">
    <source>
    </source>
</evidence>
<evidence type="ECO:0000312" key="22">
    <source>
        <dbReference type="SGD" id="S000004015"/>
    </source>
</evidence>
<evidence type="ECO:0007744" key="23">
    <source>
    </source>
</evidence>
<evidence type="ECO:0007744" key="24">
    <source>
    </source>
</evidence>
<evidence type="ECO:0007744" key="25">
    <source>
    </source>
</evidence>
<evidence type="ECO:0007744" key="26">
    <source>
    </source>
</evidence>
<evidence type="ECO:0007829" key="27">
    <source>
        <dbReference type="PDB" id="5FD7"/>
    </source>
</evidence>
<evidence type="ECO:0007829" key="28">
    <source>
        <dbReference type="PDB" id="5FD9"/>
    </source>
</evidence>
<keyword id="KW-0002">3D-structure</keyword>
<keyword id="KW-0963">Cytoplasm</keyword>
<keyword id="KW-0967">Endosome</keyword>
<keyword id="KW-1017">Isopeptide bond</keyword>
<keyword id="KW-0472">Membrane</keyword>
<keyword id="KW-0539">Nucleus</keyword>
<keyword id="KW-0597">Phosphoprotein</keyword>
<keyword id="KW-0653">Protein transport</keyword>
<keyword id="KW-1185">Reference proteome</keyword>
<keyword id="KW-0813">Transport</keyword>
<keyword id="KW-0832">Ubl conjugation</keyword>
<comment type="function">
    <text evidence="2 3 6 10 11 12 14 16">Acts a component of the ESCRT-III complex required for the sorting and concentration of proteins resulting in the entry of these proteins into the invaginating vesicles of the multivesicular body (MVB) (PubMed:11559748, PubMed:12194857). The sequential action of ESCRT-0, -I, and -II together with the ordered assembly of ESCRT-III links membrane invagination to cargo sorting (PubMed:12194857). Membrane scission in the neck of the growing vesicle releases mature, cargo-laden ILVs into the lumen (PubMed:24139821, PubMed:24711499). ESCRT-III is critical for late steps in MVB sorting, such as membrane invagination and final cargo sorting and recruitment of late-acting components of the sorting machinery (PubMed:24139821, PubMed:24711499). SNF7 is the most abundant ESCRT-III subunit which forms membrane-sculpting filaments with 30 Angstrom periodicity and a exposed cationic membrane-binding surface (PubMed:26670543). Its activation requires a prominent conformational rearrangement to expose protein-membrane and protein-protein interfaces (PubMed:26670543). SNF7 filaments then form spirals that could function as spiral springs (PubMed:26522593). The elastic expansion of compressed SNF7 spirals generates an area difference between the two sides of the membrane and thus curvature which could be the origin of membrane deformation leading eventually to fission (PubMed:26522593). SNF7 recruits BRO1, which in turn recruits DOA4, which deubiquitinates cargos before their enclosure within MVB vesicles (PubMed:11029042, PubMed:15935782). ESCRT-III is also recruited to the nuclear envelope (NE) by integral INM proteins to surveil and clear defective nuclear pore complex (NPC) assembly intermediates to ensure the fidelity of NPC assembly (PubMed:25303532).</text>
</comment>
<comment type="subunit">
    <text evidence="3 5 6 7 8 9 11 12 13 14">Core component of the ESCRT-III complex (endosomal sorting required for transport complex III) (PubMed:12194857, PubMed:18854142). ESCRT-III appears to be sequentially assembled as a flat lattice on the endosome membrane and forms a transient 450 kDa complex that contains DID4, oligomerized SNF7, VPS20 and VPS24 (PubMed:18854142). SNF7 polymerizes into spirals at the surface of lipid bilayers (PubMed:26522593). SNF7 polymerization is nucleated by association of SNF7 with VPS20; the process is terminated through association of VPS24, possibly by capping the SNF7 filament (PubMed:24058170, PubMed:24711499). Interacts with VTA1; the interaction requires DID2 (PubMed:16601096, PubMed:24058170). Interacts with BRO1 (PubMed:15086794, PubMed:15935782, PubMed:24058170). Interacts with DOA4 (PubMed:26427873). Interacts with HEH1 and HEH2 (PubMed:25303532). Interacts with RIM20 and YGR122W (PubMed:24058170).</text>
</comment>
<comment type="interaction">
    <interactant intactId="EBI-17554">
        <id>P39929</id>
    </interactant>
    <interactant intactId="EBI-3768">
        <id>P48582</id>
        <label>BRO1</label>
    </interactant>
    <organismsDiffer>false</organismsDiffer>
    <experiments>4</experiments>
</comment>
<comment type="interaction">
    <interactant intactId="EBI-17554">
        <id>P39929</id>
    </interactant>
    <interactant intactId="EBI-2053489">
        <id>P69771</id>
        <label>DID2</label>
    </interactant>
    <organismsDiffer>false</organismsDiffer>
    <experiments>3</experiments>
</comment>
<comment type="interaction">
    <interactant intactId="EBI-17554">
        <id>P39929</id>
    </interactant>
    <interactant intactId="EBI-26574">
        <id>P36108</id>
        <label>DID4</label>
    </interactant>
    <organismsDiffer>false</organismsDiffer>
    <experiments>5</experiments>
</comment>
<comment type="interaction">
    <interactant intactId="EBI-17554">
        <id>P39929</id>
    </interactant>
    <interactant intactId="EBI-22131">
        <id>Q03281</id>
        <label>HEH2</label>
    </interactant>
    <organismsDiffer>false</organismsDiffer>
    <experiments>3</experiments>
</comment>
<comment type="interaction">
    <interactant intactId="EBI-17554">
        <id>P39929</id>
    </interactant>
    <interactant intactId="EBI-17554">
        <id>P39929</id>
        <label>SNF7</label>
    </interactant>
    <organismsDiffer>false</organismsDiffer>
    <experiments>9</experiments>
</comment>
<comment type="interaction">
    <interactant intactId="EBI-17554">
        <id>P39929</id>
    </interactant>
    <interactant intactId="EBI-28157">
        <id>Q04272</id>
        <label>VPS20</label>
    </interactant>
    <organismsDiffer>false</organismsDiffer>
    <experiments>5</experiments>
</comment>
<comment type="interaction">
    <interactant intactId="EBI-17554">
        <id>P39929</id>
    </interactant>
    <interactant intactId="EBI-26653">
        <id>P36095</id>
        <label>VPS24</label>
    </interactant>
    <organismsDiffer>false</organismsDiffer>
    <experiments>3</experiments>
</comment>
<comment type="interaction">
    <interactant intactId="EBI-17554">
        <id>P39929</id>
    </interactant>
    <interactant intactId="EBI-20475">
        <id>P52917</id>
        <label>VPS4</label>
    </interactant>
    <organismsDiffer>false</organismsDiffer>
    <experiments>3</experiments>
</comment>
<comment type="interaction">
    <interactant intactId="EBI-17554">
        <id>P39929</id>
    </interactant>
    <interactant intactId="EBI-2090142">
        <id>Q03390</id>
        <label>VPS60</label>
    </interactant>
    <organismsDiffer>false</organismsDiffer>
    <experiments>3</experiments>
</comment>
<comment type="interaction">
    <interactant intactId="EBI-17554">
        <id>P39929</id>
    </interactant>
    <interactant intactId="EBI-37098">
        <id>Q06263</id>
        <label>VTA1</label>
    </interactant>
    <organismsDiffer>false</organismsDiffer>
    <experiments>2</experiments>
</comment>
<comment type="subcellular location">
    <subcellularLocation>
        <location evidence="3">Cytoplasm</location>
    </subcellularLocation>
    <subcellularLocation>
        <location evidence="3 10">Endosome membrane</location>
        <topology evidence="3 10">Peripheral membrane protein</topology>
    </subcellularLocation>
    <subcellularLocation>
        <location evidence="12">Nucleus envelope</location>
    </subcellularLocation>
</comment>
<comment type="domain">
    <text evidence="10">The N-terminus (residues 1 to 11) forms an amphipathic helix which is required for the association to membrane.</text>
</comment>
<comment type="disruption phenotype">
    <text evidence="16">Exhibits defects in the sorting and processing of native vacuolar proteins (PubMed:3062374).</text>
</comment>
<comment type="miscellaneous">
    <text evidence="4">Present with 3270 molecules/cell in log phase SD medium.</text>
</comment>
<comment type="similarity">
    <text evidence="20">Belongs to the SNF7 family.</text>
</comment>
<comment type="caution">
    <text evidence="21">Was originally thought to be a nuclear protein and mutations were shown to prevent full derepression of the SUC2 (invertase) gene.</text>
</comment>
<comment type="online information" name="Protein Spotlight">
    <link uri="https://www.proteinspotlight.org/back_issues/180/"/>
    <text>On releasing tension - Issue 180 of June 2016</text>
</comment>
<sequence length="240" mass="26987">MWSSLFGWTSSNAKNKESPTKAIVRLREHINLLSKKQSHLRTQITNQENEARIFLTKGNKVMAKNALKKKKTIEQLLSKVEGTMESMEQQLFSIESANLNLETMRAMQEGAKAMKTIHSGLDIDKVDETMDEIREQVELGDEISDAISRPLITGANEVDEDELDEELDMLAQENANQETSKIVNNNVNAAPISENKVSLPSVPSNKIKQSENSVKDGEEEEDEEDEDEKALRELQAEMGL</sequence>
<reference key="1">
    <citation type="journal article" date="1993" name="Genetics">
        <title>Molecular and genetic analysis of the SNF7 gene in Saccharomyces cerevisiae.</title>
        <authorList>
            <person name="Tu J."/>
            <person name="Vallier L.G."/>
            <person name="Carlson M."/>
        </authorList>
    </citation>
    <scope>NUCLEOTIDE SEQUENCE [GENOMIC DNA]</scope>
    <source>
        <strain>ATCC 204508 / S288c</strain>
    </source>
</reference>
<reference key="2">
    <citation type="journal article" date="1997" name="Nature">
        <title>The nucleotide sequence of Saccharomyces cerevisiae chromosome XII.</title>
        <authorList>
            <person name="Johnston M."/>
            <person name="Hillier L.W."/>
            <person name="Riles L."/>
            <person name="Albermann K."/>
            <person name="Andre B."/>
            <person name="Ansorge W."/>
            <person name="Benes V."/>
            <person name="Brueckner M."/>
            <person name="Delius H."/>
            <person name="Dubois E."/>
            <person name="Duesterhoeft A."/>
            <person name="Entian K.-D."/>
            <person name="Floeth M."/>
            <person name="Goffeau A."/>
            <person name="Hebling U."/>
            <person name="Heumann K."/>
            <person name="Heuss-Neitzel D."/>
            <person name="Hilbert H."/>
            <person name="Hilger F."/>
            <person name="Kleine K."/>
            <person name="Koetter P."/>
            <person name="Louis E.J."/>
            <person name="Messenguy F."/>
            <person name="Mewes H.-W."/>
            <person name="Miosga T."/>
            <person name="Moestl D."/>
            <person name="Mueller-Auer S."/>
            <person name="Nentwich U."/>
            <person name="Obermaier B."/>
            <person name="Piravandi E."/>
            <person name="Pohl T.M."/>
            <person name="Portetelle D."/>
            <person name="Purnelle B."/>
            <person name="Rechmann S."/>
            <person name="Rieger M."/>
            <person name="Rinke M."/>
            <person name="Rose M."/>
            <person name="Scharfe M."/>
            <person name="Scherens B."/>
            <person name="Scholler P."/>
            <person name="Schwager C."/>
            <person name="Schwarz S."/>
            <person name="Underwood A.P."/>
            <person name="Urrestarazu L.A."/>
            <person name="Vandenbol M."/>
            <person name="Verhasselt P."/>
            <person name="Vierendeels F."/>
            <person name="Voet M."/>
            <person name="Volckaert G."/>
            <person name="Voss H."/>
            <person name="Wambutt R."/>
            <person name="Wedler E."/>
            <person name="Wedler H."/>
            <person name="Zimmermann F.K."/>
            <person name="Zollner A."/>
            <person name="Hani J."/>
            <person name="Hoheisel J.D."/>
        </authorList>
    </citation>
    <scope>NUCLEOTIDE SEQUENCE [LARGE SCALE GENOMIC DNA]</scope>
    <source>
        <strain>ATCC 204508 / S288c</strain>
    </source>
</reference>
<reference key="3">
    <citation type="journal article" date="2014" name="G3 (Bethesda)">
        <title>The reference genome sequence of Saccharomyces cerevisiae: Then and now.</title>
        <authorList>
            <person name="Engel S.R."/>
            <person name="Dietrich F.S."/>
            <person name="Fisk D.G."/>
            <person name="Binkley G."/>
            <person name="Balakrishnan R."/>
            <person name="Costanzo M.C."/>
            <person name="Dwight S.S."/>
            <person name="Hitz B.C."/>
            <person name="Karra K."/>
            <person name="Nash R.S."/>
            <person name="Weng S."/>
            <person name="Wong E.D."/>
            <person name="Lloyd P."/>
            <person name="Skrzypek M.S."/>
            <person name="Miyasato S.R."/>
            <person name="Simison M."/>
            <person name="Cherry J.M."/>
        </authorList>
    </citation>
    <scope>GENOME REANNOTATION</scope>
    <source>
        <strain>ATCC 204508 / S288c</strain>
    </source>
</reference>
<reference key="4">
    <citation type="journal article" date="2007" name="Genome Res.">
        <title>Approaching a complete repository of sequence-verified protein-encoding clones for Saccharomyces cerevisiae.</title>
        <authorList>
            <person name="Hu Y."/>
            <person name="Rolfs A."/>
            <person name="Bhullar B."/>
            <person name="Murthy T.V.S."/>
            <person name="Zhu C."/>
            <person name="Berger M.F."/>
            <person name="Camargo A.A."/>
            <person name="Kelley F."/>
            <person name="McCarron S."/>
            <person name="Jepson D."/>
            <person name="Richardson A."/>
            <person name="Raphael J."/>
            <person name="Moreira D."/>
            <person name="Taycher E."/>
            <person name="Zuo D."/>
            <person name="Mohr S."/>
            <person name="Kane M.F."/>
            <person name="Williamson J."/>
            <person name="Simpson A.J.G."/>
            <person name="Bulyk M.L."/>
            <person name="Harlow E."/>
            <person name="Marsischky G."/>
            <person name="Kolodner R.D."/>
            <person name="LaBaer J."/>
        </authorList>
    </citation>
    <scope>NUCLEOTIDE SEQUENCE [GENOMIC DNA]</scope>
    <source>
        <strain>ATCC 204508 / S288c</strain>
    </source>
</reference>
<reference key="5">
    <citation type="journal article" date="1988" name="Mol. Cell. Biol.">
        <title>Protein sorting in Saccharomyces cerevisiae: isolation of mutants defective in the delivery and processing of multiple vacuolar hydrolases.</title>
        <authorList>
            <person name="Robinson J.S."/>
            <person name="Klionsky D.J."/>
            <person name="Banta L.M."/>
            <person name="Emr S.D."/>
        </authorList>
    </citation>
    <scope>DISRUPTION PHENOTYPE</scope>
</reference>
<reference key="6">
    <citation type="journal article" date="1991" name="Genetics">
        <title>New SNF genes, GAL11 and GRR1 affect SUC2 expression in Saccharomyces cerevisiae.</title>
        <authorList>
            <person name="Vallier L.G."/>
            <person name="Carlson M."/>
        </authorList>
    </citation>
    <scope>IDENTIFICATION</scope>
</reference>
<reference key="7">
    <citation type="journal article" date="2000" name="Mol. Biol. Cell">
        <title>The Doa4 deubiquitinating enzyme is functionally linked to the vacuolar protein-sorting and endocytic pathways.</title>
        <authorList>
            <person name="Amerik A.Y."/>
            <person name="Nowak J."/>
            <person name="Swaminathan S."/>
            <person name="Hochstrasser M."/>
        </authorList>
    </citation>
    <scope>FUNCTION</scope>
</reference>
<reference key="8">
    <citation type="journal article" date="2001" name="J. Cell Sci.">
        <title>CHMP1 functions as a member of a newly defined family of vesicle trafficking proteins.</title>
        <authorList>
            <person name="Howard T.L."/>
            <person name="Stauffer D.R."/>
            <person name="Degnin C.R."/>
            <person name="Hollenberg S.M."/>
        </authorList>
    </citation>
    <scope>FUNCTION</scope>
</reference>
<reference key="9">
    <citation type="journal article" date="2002" name="Dev. Cell">
        <title>Escrt-III: an endosome-associated heterooligomeric protein complex required for mvb sorting.</title>
        <authorList>
            <person name="Babst M."/>
            <person name="Katzmann D.J."/>
            <person name="Estepa-Sabal E.J."/>
            <person name="Meerloo T."/>
            <person name="Emr S.D."/>
        </authorList>
    </citation>
    <scope>FUNCTION</scope>
    <scope>IDENTIFICATION IN THE ESCRT-III COMPLEX</scope>
    <scope>INTERACTION WITH VPS20</scope>
    <scope>SUBCELLULAR LOCATION</scope>
</reference>
<reference key="10">
    <citation type="journal article" date="2003" name="Nature">
        <title>Global analysis of protein expression in yeast.</title>
        <authorList>
            <person name="Ghaemmaghami S."/>
            <person name="Huh W.-K."/>
            <person name="Bower K."/>
            <person name="Howson R.W."/>
            <person name="Belle A."/>
            <person name="Dephoure N."/>
            <person name="O'Shea E.K."/>
            <person name="Weissman J.S."/>
        </authorList>
    </citation>
    <scope>LEVEL OF PROTEIN EXPRESSION [LARGE SCALE ANALYSIS]</scope>
</reference>
<reference key="11">
    <citation type="journal article" date="2004" name="Traffic">
        <title>Protein-protein interactions of ESCRT complexes in the yeast Saccharomyces cerevisiae.</title>
        <authorList>
            <person name="Bowers K."/>
            <person name="Lottridge J."/>
            <person name="Helliwell S.B."/>
            <person name="Goldthwaite L.M."/>
            <person name="Luzio J.P."/>
            <person name="Stevens T.H."/>
        </authorList>
    </citation>
    <scope>INTERACTION WITH BRO1</scope>
</reference>
<reference key="12">
    <citation type="journal article" date="2005" name="Dev. Cell">
        <title>Structural basis for endosomal targeting by the Bro1 domain.</title>
        <authorList>
            <person name="Kim J."/>
            <person name="Sitaraman S."/>
            <person name="Hierro A."/>
            <person name="Beach B.M."/>
            <person name="Odorizzi G."/>
            <person name="Hurley J.H."/>
        </authorList>
    </citation>
    <scope>INTERACTION WITH BRO1</scope>
    <scope>FUNCTION</scope>
</reference>
<reference key="13">
    <citation type="journal article" date="2006" name="Proc. Natl. Acad. Sci. U.S.A.">
        <title>Vta1p and Vps46p regulate the membrane association and ATPase activity of Vps4p at the yeast multivesicular body.</title>
        <authorList>
            <person name="Lottridge J.M."/>
            <person name="Flannery A.R."/>
            <person name="Vincelli J.L."/>
            <person name="Stevens T.H."/>
        </authorList>
    </citation>
    <scope>INTERACTION WITH VTA1</scope>
</reference>
<reference key="14">
    <citation type="journal article" date="2007" name="J. Proteome Res.">
        <title>Large-scale phosphorylation analysis of alpha-factor-arrested Saccharomyces cerevisiae.</title>
        <authorList>
            <person name="Li X."/>
            <person name="Gerber S.A."/>
            <person name="Rudner A.D."/>
            <person name="Beausoleil S.A."/>
            <person name="Haas W."/>
            <person name="Villen J."/>
            <person name="Elias J.E."/>
            <person name="Gygi S.P."/>
        </authorList>
    </citation>
    <scope>PHOSPHORYLATION [LARGE SCALE ANALYSIS] AT THR-72</scope>
    <scope>IDENTIFICATION BY MASS SPECTROMETRY [LARGE SCALE ANALYSIS]</scope>
    <source>
        <strain>ADR376</strain>
    </source>
</reference>
<reference key="15">
    <citation type="journal article" date="2007" name="Proc. Natl. Acad. Sci. U.S.A.">
        <title>Analysis of phosphorylation sites on proteins from Saccharomyces cerevisiae by electron transfer dissociation (ETD) mass spectrometry.</title>
        <authorList>
            <person name="Chi A."/>
            <person name="Huttenhower C."/>
            <person name="Geer L.Y."/>
            <person name="Coon J.J."/>
            <person name="Syka J.E.P."/>
            <person name="Bai D.L."/>
            <person name="Shabanowitz J."/>
            <person name="Burke D.J."/>
            <person name="Troyanskaya O.G."/>
            <person name="Hunt D.F."/>
        </authorList>
    </citation>
    <scope>PHOSPHORYLATION [LARGE SCALE ANALYSIS] AT THR-72</scope>
    <scope>IDENTIFICATION BY MASS SPECTROMETRY [LARGE SCALE ANALYSIS]</scope>
</reference>
<reference key="16">
    <citation type="journal article" date="2008" name="Dev. Cell">
        <title>Ordered assembly of the ESCRT-III complex on endosomes is required to sequester cargo during MVB formation.</title>
        <authorList>
            <person name="Teis D."/>
            <person name="Saksena S."/>
            <person name="Emr S.D."/>
        </authorList>
    </citation>
    <scope>ASSEMBLY OF THE ESCRT-III COMPLEX</scope>
</reference>
<reference key="17">
    <citation type="journal article" date="2008" name="Mol. Cell. Proteomics">
        <title>A multidimensional chromatography technology for in-depth phosphoproteome analysis.</title>
        <authorList>
            <person name="Albuquerque C.P."/>
            <person name="Smolka M.B."/>
            <person name="Payne S.H."/>
            <person name="Bafna V."/>
            <person name="Eng J."/>
            <person name="Zhou H."/>
        </authorList>
    </citation>
    <scope>PHOSPHORYLATION [LARGE SCALE ANALYSIS] AT SER-119 AND SER-193</scope>
    <scope>IDENTIFICATION BY MASS SPECTROMETRY [LARGE SCALE ANALYSIS]</scope>
</reference>
<reference key="18">
    <citation type="journal article" date="2009" name="Science">
        <title>Global analysis of Cdk1 substrate phosphorylation sites provides insights into evolution.</title>
        <authorList>
            <person name="Holt L.J."/>
            <person name="Tuch B.B."/>
            <person name="Villen J."/>
            <person name="Johnson A.D."/>
            <person name="Gygi S.P."/>
            <person name="Morgan D.O."/>
        </authorList>
    </citation>
    <scope>IDENTIFICATION BY MASS SPECTROMETRY [LARGE SCALE ANALYSIS]</scope>
</reference>
<reference key="19">
    <citation type="journal article" date="2012" name="Proteomics">
        <title>Sites of ubiquitin attachment in Saccharomyces cerevisiae.</title>
        <authorList>
            <person name="Starita L.M."/>
            <person name="Lo R.S."/>
            <person name="Eng J.K."/>
            <person name="von Haller P.D."/>
            <person name="Fields S."/>
        </authorList>
    </citation>
    <scope>UBIQUITINATION [LARGE SCALE ANALYSIS] AT LYS-229</scope>
    <scope>IDENTIFICATION BY MASS SPECTROMETRY [LARGE SCALE ANALYSIS]</scope>
</reference>
<reference key="20">
    <citation type="journal article" date="2013" name="Dev. Cell">
        <title>Essential N-terminal insertion motif anchors the ESCRT-III filament during MVB vesicle formation.</title>
        <authorList>
            <person name="Buchkovich N.J."/>
            <person name="Henne W.M."/>
            <person name="Tang S."/>
            <person name="Emr S.D."/>
        </authorList>
    </citation>
    <scope>FUNCTION</scope>
    <scope>DOMAIN</scope>
    <scope>SUBCELLULAR LOCATION</scope>
    <scope>MUTAGENESIS OF TRP-2; PHE-6 AND TRP-8</scope>
</reference>
<reference key="21">
    <citation type="journal article" date="2013" name="Eukaryot. Cell">
        <title>Interaction maps of the Saccharomyces cerevisiae ESCRT-III protein Snf7.</title>
        <authorList>
            <person name="Sciskala B."/>
            <person name="Koelling R."/>
        </authorList>
    </citation>
    <scope>INTERACTION WITH BRO1; RIM20; VPS20; VPS24; VPS4; VTA1 AND YGR122W</scope>
</reference>
<reference key="22">
    <citation type="journal article" date="2014" name="J. Cell Biol.">
        <title>Coordinated binding of Vps4 to ESCRT-III drives membrane neck constriction during MVB vesicle formation.</title>
        <authorList>
            <person name="Adell M.A."/>
            <person name="Vogel G.F."/>
            <person name="Pakdel M."/>
            <person name="Mueller M."/>
            <person name="Lindner H."/>
            <person name="Hess M.W."/>
            <person name="Teis D."/>
        </authorList>
    </citation>
    <scope>INTERACTION WITH VPS4</scope>
    <scope>FUNCTION OF THE ESCRT-III COMPLEX</scope>
</reference>
<reference key="23">
    <citation type="journal article" date="2014" name="Cell">
        <title>Surveillance of nuclear pore complex assembly by ESCRT-III/Vps4.</title>
        <authorList>
            <person name="Webster B.M."/>
            <person name="Colombi P."/>
            <person name="Jaeger J."/>
            <person name="Lusk C.P."/>
        </authorList>
    </citation>
    <scope>FUNCTION</scope>
    <scope>INTERACTION WITH HEH1 AND HEH2</scope>
    <scope>SUBCELLULAR LOCATION</scope>
</reference>
<reference key="24">
    <citation type="journal article" date="2015" name="Biochem. Biophys. Res. Commun.">
        <title>The N-terminal domains determine cellular localization and functions of the Doa4 and Ubp5 deubiquitinating enzymes.</title>
        <authorList>
            <person name="Wolters N."/>
            <person name="Amerik A."/>
        </authorList>
    </citation>
    <scope>INTERACTION WITH DOA4</scope>
</reference>
<reference key="25">
    <citation type="journal article" date="2015" name="Cell">
        <title>Relaxation of loaded ESCRT-III spiral springs drives membrane deformation.</title>
        <authorList>
            <person name="Chiaruttini N."/>
            <person name="Redondo-Morata L."/>
            <person name="Colom A."/>
            <person name="Humbert F."/>
            <person name="Lenz M."/>
            <person name="Scheuring S."/>
            <person name="Roux A."/>
        </authorList>
    </citation>
    <scope>FUNCTION</scope>
    <scope>SUBUNIT</scope>
    <scope>ELECTRON MICROSCOPY</scope>
</reference>
<reference key="26">
    <citation type="journal article" date="2015" name="Elife">
        <title>Structural basis for activation, assembly and membrane binding of ESCRT-III Snf7 filaments.</title>
        <authorList>
            <person name="Tang S."/>
            <person name="Henne W.M."/>
            <person name="Borbat P.P."/>
            <person name="Buchkovich N.J."/>
            <person name="Freed J.H."/>
            <person name="Mao Y."/>
            <person name="Fromme J.C."/>
            <person name="Emr S.D."/>
        </authorList>
    </citation>
    <scope>X-RAY CRYSTALLOGRAPHY (1.60 ANGSTROMS) OF 12-150</scope>
    <scope>MUTAGENESIS OF ARG-25; HIS-29; LYS-36; ARG-52; THR-83; MET-87; GLN-90; ILE-94; GLU-95; ALA-97; LEU-99; LEU-101; GLU-102; THR-103; MET-104; MET-107; GLU-109; MET-114; ILE-117 AND LEU-121</scope>
    <scope>FUNCTION</scope>
</reference>
<gene>
    <name evidence="18" type="primary">SNF7</name>
    <name evidence="17" type="synonym">DID1</name>
    <name evidence="19" type="synonym">VPS32</name>
    <name evidence="22" type="ordered locus">YLR025W</name>
</gene>
<proteinExistence type="evidence at protein level"/>
<accession>P39929</accession>
<accession>D6VY27</accession>
<accession>E9P8V6</accession>
<feature type="chain" id="PRO_0000211446" description="Vacuolar-sorting protein SNF7">
    <location>
        <begin position="1"/>
        <end position="240"/>
    </location>
</feature>
<feature type="region of interest" description="Disordered" evidence="1">
    <location>
        <begin position="193"/>
        <end position="240"/>
    </location>
</feature>
<feature type="compositionally biased region" description="Polar residues" evidence="1">
    <location>
        <begin position="195"/>
        <end position="212"/>
    </location>
</feature>
<feature type="compositionally biased region" description="Acidic residues" evidence="1">
    <location>
        <begin position="217"/>
        <end position="228"/>
    </location>
</feature>
<feature type="compositionally biased region" description="Basic and acidic residues" evidence="1">
    <location>
        <begin position="229"/>
        <end position="240"/>
    </location>
</feature>
<feature type="modified residue" description="Phosphothreonine" evidence="23 24">
    <location>
        <position position="72"/>
    </location>
</feature>
<feature type="modified residue" description="Phosphoserine" evidence="25">
    <location>
        <position position="119"/>
    </location>
</feature>
<feature type="modified residue" description="Phosphoserine" evidence="25">
    <location>
        <position position="193"/>
    </location>
</feature>
<feature type="cross-link" description="Glycyl lysine isopeptide (Lys-Gly) (interchain with G-Cter in ubiquitin)" evidence="26">
    <location>
        <position position="229"/>
    </location>
</feature>
<feature type="mutagenesis site" description="Impairs binding to membrane." evidence="10">
    <original>W</original>
    <variation>E</variation>
    <location>
        <position position="2"/>
    </location>
</feature>
<feature type="mutagenesis site" description="Impairs binding to membrane." evidence="10">
    <original>F</original>
    <variation>E</variation>
    <location>
        <position position="6"/>
    </location>
</feature>
<feature type="mutagenesis site" description="Impairs binding to membrane." evidence="10">
    <original>W</original>
    <variation>E</variation>
    <location>
        <position position="8"/>
    </location>
</feature>
<feature type="mutagenesis site" description="Leads to severe sorting defects; when associated with E-29 and E-36." evidence="15">
    <original>R</original>
    <variation>E</variation>
    <location>
        <position position="25"/>
    </location>
</feature>
<feature type="mutagenesis site" description="Leads to severe sorting defects; when associated with E-25 and E-36." evidence="15">
    <original>H</original>
    <variation>E</variation>
    <location>
        <position position="29"/>
    </location>
</feature>
<feature type="mutagenesis site" description="Leads to severe sorting defects; when associated with E-25 and E-29." evidence="15">
    <original>K</original>
    <variation>E</variation>
    <location>
        <position position="36"/>
    </location>
</feature>
<feature type="mutagenesis site" description="Impairs the formation of protofilaments; when associated with K-90. Also impairs the formation of protofilaments; when associated with E-94. Also impairs the formation of protofilaments; when associated with E-107. Also impairs the formation of protofilaments; when associated with E-114." evidence="15">
    <original>R</original>
    <variation>E</variation>
    <location>
        <position position="52"/>
    </location>
</feature>
<feature type="mutagenesis site" description="Leads to severe sorting defects." evidence="15">
    <original>T</original>
    <variation>E</variation>
    <location>
        <position position="83"/>
    </location>
</feature>
<feature type="mutagenesis site" description="Leads to severe sorting defects." evidence="15">
    <original>M</original>
    <variation>E</variation>
    <location>
        <position position="87"/>
    </location>
</feature>
<feature type="mutagenesis site" description="Leads to severe sorting defects. Impairs the formation of protofilaments; when associated with E-52." evidence="15">
    <original>Q</original>
    <variation>K</variation>
    <location>
        <position position="90"/>
    </location>
</feature>
<feature type="mutagenesis site" description="Leads to severe sorting defects. Impairs the formation of protofilaments; when associated with E-52." evidence="15">
    <original>I</original>
    <variation>E</variation>
    <location>
        <position position="94"/>
    </location>
</feature>
<feature type="mutagenesis site" description="Leads to severe sorting defects; when associated with K-102 and K-109." evidence="15">
    <original>E</original>
    <variation>K</variation>
    <location>
        <position position="95"/>
    </location>
</feature>
<feature type="mutagenesis site" description="Leads to severe sorting defects." evidence="15">
    <original>A</original>
    <variation>K</variation>
    <location>
        <position position="97"/>
    </location>
</feature>
<feature type="mutagenesis site" description="Leads to severe sorting defects." evidence="15">
    <original>L</original>
    <variation>K</variation>
    <location>
        <position position="99"/>
    </location>
</feature>
<feature type="mutagenesis site" description="Leads to severe sorting defects." evidence="15">
    <original>L</original>
    <variation>E</variation>
    <location>
        <position position="101"/>
    </location>
</feature>
<feature type="mutagenesis site" description="Leads to severe sorting defects; when associated with K-95 and K-109." evidence="15">
    <original>E</original>
    <variation>K</variation>
    <location>
        <position position="102"/>
    </location>
</feature>
<feature type="mutagenesis site" description="Leads to severe sorting defects." evidence="15">
    <original>T</original>
    <variation>E</variation>
    <location>
        <position position="103"/>
    </location>
</feature>
<feature type="mutagenesis site" description="Leads to severe sorting defects." evidence="15">
    <original>M</original>
    <variation>E</variation>
    <location>
        <position position="104"/>
    </location>
</feature>
<feature type="mutagenesis site" description="Leads to severe sorting defects. Impairs the formation of protofilaments; when associated with E-52." evidence="15">
    <original>M</original>
    <variation>E</variation>
    <location>
        <position position="107"/>
    </location>
</feature>
<feature type="mutagenesis site" description="Leads to severe sorting defects; when associated with K-95 and K-102." evidence="15">
    <original>E</original>
    <variation>K</variation>
    <location>
        <position position="109"/>
    </location>
</feature>
<feature type="mutagenesis site" description="Leads to severe sorting defects. Impairs the formation of protofilaments; when associated with E-52." evidence="15">
    <original>M</original>
    <variation>E</variation>
    <location>
        <position position="114"/>
    </location>
</feature>
<feature type="mutagenesis site" description="Leads to severe sorting defects." evidence="15">
    <original>I</original>
    <variation>E</variation>
    <location>
        <position position="117"/>
    </location>
</feature>
<feature type="mutagenesis site" description="Leads to severe sorting defects." evidence="15">
    <original>L</original>
    <variation>D</variation>
    <location>
        <position position="121"/>
    </location>
</feature>
<feature type="sequence conflict" description="In Ref. 4; AAS56528." evidence="20" ref="4">
    <original>E</original>
    <variation>G</variation>
    <location>
        <position position="173"/>
    </location>
</feature>
<feature type="helix" evidence="28">
    <location>
        <begin position="19"/>
        <end position="56"/>
    </location>
</feature>
<feature type="helix" evidence="28">
    <location>
        <begin position="60"/>
        <end position="118"/>
    </location>
</feature>
<feature type="turn" evidence="27">
    <location>
        <begin position="120"/>
        <end position="122"/>
    </location>
</feature>
<feature type="helix" evidence="28">
    <location>
        <begin position="127"/>
        <end position="138"/>
    </location>
</feature>
<feature type="turn" evidence="28">
    <location>
        <begin position="139"/>
        <end position="141"/>
    </location>
</feature>
<protein>
    <recommendedName>
        <fullName evidence="20">Vacuolar-sorting protein SNF7</fullName>
    </recommendedName>
    <alternativeName>
        <fullName evidence="17">DOA4-independent degradation protein 1</fullName>
    </alternativeName>
    <alternativeName>
        <fullName evidence="18">Sucrose nonfermenting protein 7</fullName>
    </alternativeName>
    <alternativeName>
        <fullName evidence="19">Vacuolar protein-sorting-associated protein 32</fullName>
    </alternativeName>
</protein>
<name>SNF7_YEAST</name>